<organism>
    <name type="scientific">Enterobacter sp. (strain 638)</name>
    <dbReference type="NCBI Taxonomy" id="399742"/>
    <lineage>
        <taxon>Bacteria</taxon>
        <taxon>Pseudomonadati</taxon>
        <taxon>Pseudomonadota</taxon>
        <taxon>Gammaproteobacteria</taxon>
        <taxon>Enterobacterales</taxon>
        <taxon>Enterobacteriaceae</taxon>
        <taxon>Enterobacter</taxon>
    </lineage>
</organism>
<reference key="1">
    <citation type="journal article" date="2010" name="PLoS Genet.">
        <title>Genome sequence of the plant growth promoting endophytic bacterium Enterobacter sp. 638.</title>
        <authorList>
            <person name="Taghavi S."/>
            <person name="van der Lelie D."/>
            <person name="Hoffman A."/>
            <person name="Zhang Y.B."/>
            <person name="Walla M.D."/>
            <person name="Vangronsveld J."/>
            <person name="Newman L."/>
            <person name="Monchy S."/>
        </authorList>
    </citation>
    <scope>NUCLEOTIDE SEQUENCE [LARGE SCALE GENOMIC DNA]</scope>
    <source>
        <strain>638</strain>
    </source>
</reference>
<proteinExistence type="inferred from homology"/>
<sequence>MRTEYCGQLRQSHVGQQVTLCGWVNRRRDLGSLIFIDLRDREGIVQVFFDPDRAEALKLASELRNEFCIQVTGTVRARDEKNINADMATGEIEVLASDLTIINRSESLPLDSNHVNTEEARLKFRYLDLRRPEMAQRLKTRAKITSLVRRFMDDHGFLDIETPMLTKATPEGARDYLVPSRVHKGKFYALPQSPQLFKQLLMMSGFDRYYQIVKCFRDEDLRADRQPEFTQIDVETSFMTAPQVRELMEALVRSLWLDVKGVDLGDFPIMTFAEAERRYGSDKPDLRNPMELVDVADLLKAVEFAVFSGPANDAKGRVAALRVPGGASLSRKQIDDYGNFVKIYGAKGLAYIKVTERAKGIEGITSPVAKFLNAEIVESILERTGAQDGDMIFFGADNKKVVADALGALRLKLGKDLSLTDEAKWAPLWVIDFPMFEDDGEGGLTAMHHPFTSAKDMNADELKAAPETAIANAYDMVINGYEVGGGSVRIHSGEMQQTVFGILGINEQEQREKFGFLLDALKYGTPPHAGLAFGLDRLTMLLTGTDNIRDVIAFPKTTAAACLMTEAPSFANPASLAELGIDVVKKEEKN</sequence>
<feature type="chain" id="PRO_1000057303" description="Aspartate--tRNA ligase">
    <location>
        <begin position="1"/>
        <end position="590"/>
    </location>
</feature>
<feature type="region of interest" description="Aspartate" evidence="1">
    <location>
        <begin position="195"/>
        <end position="198"/>
    </location>
</feature>
<feature type="binding site" evidence="1">
    <location>
        <position position="171"/>
    </location>
    <ligand>
        <name>L-aspartate</name>
        <dbReference type="ChEBI" id="CHEBI:29991"/>
    </ligand>
</feature>
<feature type="binding site" evidence="1">
    <location>
        <begin position="217"/>
        <end position="219"/>
    </location>
    <ligand>
        <name>ATP</name>
        <dbReference type="ChEBI" id="CHEBI:30616"/>
    </ligand>
</feature>
<feature type="binding site" evidence="1">
    <location>
        <position position="217"/>
    </location>
    <ligand>
        <name>L-aspartate</name>
        <dbReference type="ChEBI" id="CHEBI:29991"/>
    </ligand>
</feature>
<feature type="binding site" evidence="1">
    <location>
        <position position="226"/>
    </location>
    <ligand>
        <name>ATP</name>
        <dbReference type="ChEBI" id="CHEBI:30616"/>
    </ligand>
</feature>
<feature type="binding site" evidence="1">
    <location>
        <position position="448"/>
    </location>
    <ligand>
        <name>L-aspartate</name>
        <dbReference type="ChEBI" id="CHEBI:29991"/>
    </ligand>
</feature>
<feature type="binding site" evidence="1">
    <location>
        <position position="482"/>
    </location>
    <ligand>
        <name>ATP</name>
        <dbReference type="ChEBI" id="CHEBI:30616"/>
    </ligand>
</feature>
<feature type="binding site" evidence="1">
    <location>
        <position position="489"/>
    </location>
    <ligand>
        <name>L-aspartate</name>
        <dbReference type="ChEBI" id="CHEBI:29991"/>
    </ligand>
</feature>
<feature type="binding site" evidence="1">
    <location>
        <begin position="534"/>
        <end position="537"/>
    </location>
    <ligand>
        <name>ATP</name>
        <dbReference type="ChEBI" id="CHEBI:30616"/>
    </ligand>
</feature>
<evidence type="ECO:0000255" key="1">
    <source>
        <dbReference type="HAMAP-Rule" id="MF_00044"/>
    </source>
</evidence>
<keyword id="KW-0030">Aminoacyl-tRNA synthetase</keyword>
<keyword id="KW-0067">ATP-binding</keyword>
<keyword id="KW-0963">Cytoplasm</keyword>
<keyword id="KW-0436">Ligase</keyword>
<keyword id="KW-0547">Nucleotide-binding</keyword>
<keyword id="KW-0648">Protein biosynthesis</keyword>
<dbReference type="EC" id="6.1.1.12" evidence="1"/>
<dbReference type="EMBL" id="CP000653">
    <property type="protein sequence ID" value="ABP61103.1"/>
    <property type="molecule type" value="Genomic_DNA"/>
</dbReference>
<dbReference type="RefSeq" id="WP_015959436.1">
    <property type="nucleotide sequence ID" value="NC_009436.1"/>
</dbReference>
<dbReference type="SMR" id="A4WBM3"/>
<dbReference type="STRING" id="399742.Ent638_2434"/>
<dbReference type="KEGG" id="ent:Ent638_2434"/>
<dbReference type="eggNOG" id="COG0173">
    <property type="taxonomic scope" value="Bacteria"/>
</dbReference>
<dbReference type="HOGENOM" id="CLU_014330_3_2_6"/>
<dbReference type="OrthoDB" id="9802326at2"/>
<dbReference type="Proteomes" id="UP000000230">
    <property type="component" value="Chromosome"/>
</dbReference>
<dbReference type="GO" id="GO:0005737">
    <property type="term" value="C:cytoplasm"/>
    <property type="evidence" value="ECO:0007669"/>
    <property type="project" value="UniProtKB-SubCell"/>
</dbReference>
<dbReference type="GO" id="GO:0004815">
    <property type="term" value="F:aspartate-tRNA ligase activity"/>
    <property type="evidence" value="ECO:0007669"/>
    <property type="project" value="UniProtKB-UniRule"/>
</dbReference>
<dbReference type="GO" id="GO:0005524">
    <property type="term" value="F:ATP binding"/>
    <property type="evidence" value="ECO:0007669"/>
    <property type="project" value="UniProtKB-UniRule"/>
</dbReference>
<dbReference type="GO" id="GO:0003676">
    <property type="term" value="F:nucleic acid binding"/>
    <property type="evidence" value="ECO:0007669"/>
    <property type="project" value="InterPro"/>
</dbReference>
<dbReference type="GO" id="GO:0006422">
    <property type="term" value="P:aspartyl-tRNA aminoacylation"/>
    <property type="evidence" value="ECO:0007669"/>
    <property type="project" value="UniProtKB-UniRule"/>
</dbReference>
<dbReference type="CDD" id="cd00777">
    <property type="entry name" value="AspRS_core"/>
    <property type="match status" value="1"/>
</dbReference>
<dbReference type="CDD" id="cd04317">
    <property type="entry name" value="EcAspRS_like_N"/>
    <property type="match status" value="1"/>
</dbReference>
<dbReference type="FunFam" id="2.40.50.140:FF:000080">
    <property type="entry name" value="Aspartate--tRNA ligase"/>
    <property type="match status" value="1"/>
</dbReference>
<dbReference type="FunFam" id="3.30.1360.30:FF:000001">
    <property type="entry name" value="Aspartate--tRNA ligase"/>
    <property type="match status" value="1"/>
</dbReference>
<dbReference type="Gene3D" id="3.30.930.10">
    <property type="entry name" value="Bira Bifunctional Protein, Domain 2"/>
    <property type="match status" value="1"/>
</dbReference>
<dbReference type="Gene3D" id="3.30.1360.30">
    <property type="entry name" value="GAD-like domain"/>
    <property type="match status" value="1"/>
</dbReference>
<dbReference type="Gene3D" id="2.40.50.140">
    <property type="entry name" value="Nucleic acid-binding proteins"/>
    <property type="match status" value="1"/>
</dbReference>
<dbReference type="HAMAP" id="MF_00044">
    <property type="entry name" value="Asp_tRNA_synth_type1"/>
    <property type="match status" value="1"/>
</dbReference>
<dbReference type="InterPro" id="IPR004364">
    <property type="entry name" value="Aa-tRNA-synt_II"/>
</dbReference>
<dbReference type="InterPro" id="IPR006195">
    <property type="entry name" value="aa-tRNA-synth_II"/>
</dbReference>
<dbReference type="InterPro" id="IPR045864">
    <property type="entry name" value="aa-tRNA-synth_II/BPL/LPL"/>
</dbReference>
<dbReference type="InterPro" id="IPR004524">
    <property type="entry name" value="Asp-tRNA-ligase_1"/>
</dbReference>
<dbReference type="InterPro" id="IPR047089">
    <property type="entry name" value="Asp-tRNA-ligase_1_N"/>
</dbReference>
<dbReference type="InterPro" id="IPR002312">
    <property type="entry name" value="Asp/Asn-tRNA-synth_IIb"/>
</dbReference>
<dbReference type="InterPro" id="IPR047090">
    <property type="entry name" value="AspRS_core"/>
</dbReference>
<dbReference type="InterPro" id="IPR004115">
    <property type="entry name" value="GAD-like_sf"/>
</dbReference>
<dbReference type="InterPro" id="IPR029351">
    <property type="entry name" value="GAD_dom"/>
</dbReference>
<dbReference type="InterPro" id="IPR012340">
    <property type="entry name" value="NA-bd_OB-fold"/>
</dbReference>
<dbReference type="InterPro" id="IPR004365">
    <property type="entry name" value="NA-bd_OB_tRNA"/>
</dbReference>
<dbReference type="NCBIfam" id="TIGR00459">
    <property type="entry name" value="aspS_bact"/>
    <property type="match status" value="1"/>
</dbReference>
<dbReference type="NCBIfam" id="NF001750">
    <property type="entry name" value="PRK00476.1"/>
    <property type="match status" value="1"/>
</dbReference>
<dbReference type="PANTHER" id="PTHR22594:SF5">
    <property type="entry name" value="ASPARTATE--TRNA LIGASE, MITOCHONDRIAL"/>
    <property type="match status" value="1"/>
</dbReference>
<dbReference type="PANTHER" id="PTHR22594">
    <property type="entry name" value="ASPARTYL/LYSYL-TRNA SYNTHETASE"/>
    <property type="match status" value="1"/>
</dbReference>
<dbReference type="Pfam" id="PF02938">
    <property type="entry name" value="GAD"/>
    <property type="match status" value="1"/>
</dbReference>
<dbReference type="Pfam" id="PF00152">
    <property type="entry name" value="tRNA-synt_2"/>
    <property type="match status" value="1"/>
</dbReference>
<dbReference type="Pfam" id="PF01336">
    <property type="entry name" value="tRNA_anti-codon"/>
    <property type="match status" value="1"/>
</dbReference>
<dbReference type="PRINTS" id="PR01042">
    <property type="entry name" value="TRNASYNTHASP"/>
</dbReference>
<dbReference type="SUPFAM" id="SSF55681">
    <property type="entry name" value="Class II aaRS and biotin synthetases"/>
    <property type="match status" value="1"/>
</dbReference>
<dbReference type="SUPFAM" id="SSF55261">
    <property type="entry name" value="GAD domain-like"/>
    <property type="match status" value="1"/>
</dbReference>
<dbReference type="SUPFAM" id="SSF50249">
    <property type="entry name" value="Nucleic acid-binding proteins"/>
    <property type="match status" value="1"/>
</dbReference>
<dbReference type="PROSITE" id="PS50862">
    <property type="entry name" value="AA_TRNA_LIGASE_II"/>
    <property type="match status" value="1"/>
</dbReference>
<protein>
    <recommendedName>
        <fullName evidence="1">Aspartate--tRNA ligase</fullName>
        <ecNumber evidence="1">6.1.1.12</ecNumber>
    </recommendedName>
    <alternativeName>
        <fullName evidence="1">Aspartyl-tRNA synthetase</fullName>
        <shortName evidence="1">AspRS</shortName>
    </alternativeName>
</protein>
<gene>
    <name evidence="1" type="primary">aspS</name>
    <name type="ordered locus">Ent638_2434</name>
</gene>
<name>SYD_ENT38</name>
<accession>A4WBM3</accession>
<comment type="function">
    <text evidence="1">Catalyzes the attachment of L-aspartate to tRNA(Asp) in a two-step reaction: L-aspartate is first activated by ATP to form Asp-AMP and then transferred to the acceptor end of tRNA(Asp).</text>
</comment>
<comment type="catalytic activity">
    <reaction evidence="1">
        <text>tRNA(Asp) + L-aspartate + ATP = L-aspartyl-tRNA(Asp) + AMP + diphosphate</text>
        <dbReference type="Rhea" id="RHEA:19649"/>
        <dbReference type="Rhea" id="RHEA-COMP:9660"/>
        <dbReference type="Rhea" id="RHEA-COMP:9678"/>
        <dbReference type="ChEBI" id="CHEBI:29991"/>
        <dbReference type="ChEBI" id="CHEBI:30616"/>
        <dbReference type="ChEBI" id="CHEBI:33019"/>
        <dbReference type="ChEBI" id="CHEBI:78442"/>
        <dbReference type="ChEBI" id="CHEBI:78516"/>
        <dbReference type="ChEBI" id="CHEBI:456215"/>
        <dbReference type="EC" id="6.1.1.12"/>
    </reaction>
</comment>
<comment type="subunit">
    <text evidence="1">Homodimer.</text>
</comment>
<comment type="subcellular location">
    <subcellularLocation>
        <location evidence="1">Cytoplasm</location>
    </subcellularLocation>
</comment>
<comment type="similarity">
    <text evidence="1">Belongs to the class-II aminoacyl-tRNA synthetase family. Type 1 subfamily.</text>
</comment>